<accession>Q68DU8</accession>
<accession>Q9P2M9</accession>
<proteinExistence type="evidence at protein level"/>
<protein>
    <recommendedName>
        <fullName>BTB/POZ domain-containing protein KCTD16</fullName>
    </recommendedName>
    <alternativeName>
        <fullName>Potassium channel tetramerization domain-containing protein 16</fullName>
    </alternativeName>
</protein>
<name>KCD16_HUMAN</name>
<sequence>MALSGNCSRYYPREQGSAVPNSFPEVVELNVGGQVYFTRHSTLISIPHSLLWKMFSPKRDTANDLAKDSKGRFFIDRDGFLFRYILDYLRDRQVVLPDHFPEKGRLKREAEYFQLPDLVKLLTPDEIKQSPDEFCHSDFEDASQGSDTRICPPSSLLPADRKWGFITVGYRGSCTLGREGQADAKFRRVPRILVCGRISLAKEVFGETLNESRDPDRAPERYTSRFYLKFKHLERAFDMLSECGFHMVACNSSVTASFINQYTDDKIWSSYTEYVFYREPSRWSPSHCDCCCKNGKGDKEGESGTSCNDLSTSSCDSQSEASSPQETVICGPVTRQTNIQTLDRPIKKGPVQLIQQSEMRRKSDLLRTLTSGSRESNMSSKKKAVKEKLSIEEELEKCIQDFLKIKIPDRFPERKHPWQSELLRKYHL</sequence>
<reference key="1">
    <citation type="journal article" date="2000" name="DNA Res.">
        <title>Prediction of the coding sequences of unidentified human genes. XVI. The complete sequences of 150 new cDNA clones from brain which code for large proteins in vitro.</title>
        <authorList>
            <person name="Nagase T."/>
            <person name="Kikuno R."/>
            <person name="Ishikawa K."/>
            <person name="Hirosawa M."/>
            <person name="Ohara O."/>
        </authorList>
    </citation>
    <scope>NUCLEOTIDE SEQUENCE [LARGE SCALE MRNA]</scope>
    <source>
        <tissue>Brain</tissue>
    </source>
</reference>
<reference key="2">
    <citation type="journal article" date="2007" name="BMC Genomics">
        <title>The full-ORF clone resource of the German cDNA consortium.</title>
        <authorList>
            <person name="Bechtel S."/>
            <person name="Rosenfelder H."/>
            <person name="Duda A."/>
            <person name="Schmidt C.P."/>
            <person name="Ernst U."/>
            <person name="Wellenreuther R."/>
            <person name="Mehrle A."/>
            <person name="Schuster C."/>
            <person name="Bahr A."/>
            <person name="Bloecker H."/>
            <person name="Heubner D."/>
            <person name="Hoerlein A."/>
            <person name="Michel G."/>
            <person name="Wedler H."/>
            <person name="Koehrer K."/>
            <person name="Ottenwaelder B."/>
            <person name="Poustka A."/>
            <person name="Wiemann S."/>
            <person name="Schupp I."/>
        </authorList>
    </citation>
    <scope>NUCLEOTIDE SEQUENCE [LARGE SCALE MRNA]</scope>
    <source>
        <tissue>Retina</tissue>
    </source>
</reference>
<reference key="3">
    <citation type="journal article" date="2004" name="Genome Res.">
        <title>The status, quality, and expansion of the NIH full-length cDNA project: the Mammalian Gene Collection (MGC).</title>
        <authorList>
            <consortium name="The MGC Project Team"/>
        </authorList>
    </citation>
    <scope>NUCLEOTIDE SEQUENCE [LARGE SCALE MRNA]</scope>
    <source>
        <tissue>Brain</tissue>
    </source>
</reference>
<reference key="4">
    <citation type="journal article" date="2017" name="Biochem. J.">
        <title>Structural complexity in the KCTD family of Cullin3-dependent E3 ubiquitin ligases.</title>
        <authorList>
            <person name="Pinkas D.M."/>
            <person name="Sanvitale C.E."/>
            <person name="Bufton J.C."/>
            <person name="Sorrell F.J."/>
            <person name="Solcan N."/>
            <person name="Chalk R."/>
            <person name="Doutch J."/>
            <person name="Bullock A.N."/>
        </authorList>
    </citation>
    <scope>X-RAY CRYSTALLOGRAPHY (2.76 ANGSTROMS) OF 16-133</scope>
    <scope>SUBUNIT</scope>
</reference>
<organism>
    <name type="scientific">Homo sapiens</name>
    <name type="common">Human</name>
    <dbReference type="NCBI Taxonomy" id="9606"/>
    <lineage>
        <taxon>Eukaryota</taxon>
        <taxon>Metazoa</taxon>
        <taxon>Chordata</taxon>
        <taxon>Craniata</taxon>
        <taxon>Vertebrata</taxon>
        <taxon>Euteleostomi</taxon>
        <taxon>Mammalia</taxon>
        <taxon>Eutheria</taxon>
        <taxon>Euarchontoglires</taxon>
        <taxon>Primates</taxon>
        <taxon>Haplorrhini</taxon>
        <taxon>Catarrhini</taxon>
        <taxon>Hominidae</taxon>
        <taxon>Homo</taxon>
    </lineage>
</organism>
<dbReference type="EMBL" id="AB037738">
    <property type="protein sequence ID" value="BAA92555.1"/>
    <property type="status" value="ALT_INIT"/>
    <property type="molecule type" value="mRNA"/>
</dbReference>
<dbReference type="EMBL" id="CR749266">
    <property type="protein sequence ID" value="CAH18122.1"/>
    <property type="molecule type" value="mRNA"/>
</dbReference>
<dbReference type="EMBL" id="BC111962">
    <property type="protein sequence ID" value="AAI11963.1"/>
    <property type="molecule type" value="mRNA"/>
</dbReference>
<dbReference type="EMBL" id="BC113435">
    <property type="protein sequence ID" value="AAI13436.1"/>
    <property type="molecule type" value="mRNA"/>
</dbReference>
<dbReference type="CCDS" id="CCDS34260.1"/>
<dbReference type="RefSeq" id="NP_001357415.1">
    <property type="nucleotide sequence ID" value="NM_001370486.1"/>
</dbReference>
<dbReference type="RefSeq" id="NP_001357416.1">
    <property type="nucleotide sequence ID" value="NM_001370487.1"/>
</dbReference>
<dbReference type="RefSeq" id="NP_065819.1">
    <property type="nucleotide sequence ID" value="NM_020768.4"/>
</dbReference>
<dbReference type="RefSeq" id="XP_005268549.1">
    <property type="nucleotide sequence ID" value="XM_005268492.2"/>
</dbReference>
<dbReference type="RefSeq" id="XP_005268550.1">
    <property type="nucleotide sequence ID" value="XM_005268493.3"/>
</dbReference>
<dbReference type="RefSeq" id="XP_006714852.1">
    <property type="nucleotide sequence ID" value="XM_006714789.2"/>
</dbReference>
<dbReference type="RefSeq" id="XP_011535973.1">
    <property type="nucleotide sequence ID" value="XM_011537671.2"/>
</dbReference>
<dbReference type="RefSeq" id="XP_047300531.1">
    <property type="nucleotide sequence ID" value="XM_047444575.1"/>
</dbReference>
<dbReference type="RefSeq" id="XP_047300532.1">
    <property type="nucleotide sequence ID" value="XM_047444576.1"/>
</dbReference>
<dbReference type="RefSeq" id="XP_047300533.1">
    <property type="nucleotide sequence ID" value="XM_047444577.1"/>
</dbReference>
<dbReference type="RefSeq" id="XP_047300534.1">
    <property type="nucleotide sequence ID" value="XM_047444578.1"/>
</dbReference>
<dbReference type="PDB" id="5A15">
    <property type="method" value="X-ray"/>
    <property type="resolution" value="2.76 A"/>
    <property type="chains" value="A/B/C/D/E/F/G/H/I/J/K/L/M/N/O=16-133"/>
</dbReference>
<dbReference type="PDB" id="6I0Q">
    <property type="method" value="X-ray"/>
    <property type="resolution" value="2.30 A"/>
    <property type="chains" value="A=22-124"/>
</dbReference>
<dbReference type="PDB" id="6M8R">
    <property type="method" value="X-ray"/>
    <property type="resolution" value="3.20 A"/>
    <property type="chains" value="A/B/C/D/E/F/G/H/I/J=23-124"/>
</dbReference>
<dbReference type="PDB" id="6OCP">
    <property type="method" value="X-ray"/>
    <property type="resolution" value="2.35 A"/>
    <property type="chains" value="A/B/C/D/E/F/G/H/I/J/K/L/M/N/O=22-134"/>
</dbReference>
<dbReference type="PDB" id="6OCR">
    <property type="method" value="X-ray"/>
    <property type="resolution" value="2.28 A"/>
    <property type="chains" value="A/B/C/D/E/F/G/H/I/J/K/L/M/N/O=22-134"/>
</dbReference>
<dbReference type="PDB" id="6OCT">
    <property type="method" value="X-ray"/>
    <property type="resolution" value="2.80 A"/>
    <property type="chains" value="A/B/C/D/E/F/G/H/I/J=22-134"/>
</dbReference>
<dbReference type="PDB" id="6QB7">
    <property type="method" value="X-ray"/>
    <property type="resolution" value="2.23 A"/>
    <property type="chains" value="A/B/C/D/E=126-286"/>
</dbReference>
<dbReference type="PDBsum" id="5A15"/>
<dbReference type="PDBsum" id="6I0Q"/>
<dbReference type="PDBsum" id="6M8R"/>
<dbReference type="PDBsum" id="6OCP"/>
<dbReference type="PDBsum" id="6OCR"/>
<dbReference type="PDBsum" id="6OCT"/>
<dbReference type="PDBsum" id="6QB7"/>
<dbReference type="SMR" id="Q68DU8"/>
<dbReference type="BioGRID" id="121587">
    <property type="interactions" value="11"/>
</dbReference>
<dbReference type="CORUM" id="Q68DU8"/>
<dbReference type="FunCoup" id="Q68DU8">
    <property type="interactions" value="216"/>
</dbReference>
<dbReference type="IntAct" id="Q68DU8">
    <property type="interactions" value="8"/>
</dbReference>
<dbReference type="STRING" id="9606.ENSP00000426548"/>
<dbReference type="ChEMBL" id="CHEMBL4523340"/>
<dbReference type="GuidetoPHARMACOLOGY" id="1920"/>
<dbReference type="GlyGen" id="Q68DU8">
    <property type="glycosylation" value="1 site, 1 O-linked glycan (1 site)"/>
</dbReference>
<dbReference type="iPTMnet" id="Q68DU8"/>
<dbReference type="PhosphoSitePlus" id="Q68DU8"/>
<dbReference type="SwissPalm" id="Q68DU8"/>
<dbReference type="BioMuta" id="KCTD16"/>
<dbReference type="DMDM" id="74708941"/>
<dbReference type="jPOST" id="Q68DU8"/>
<dbReference type="MassIVE" id="Q68DU8"/>
<dbReference type="PaxDb" id="9606-ENSP00000426548"/>
<dbReference type="PeptideAtlas" id="Q68DU8"/>
<dbReference type="ProteomicsDB" id="66102"/>
<dbReference type="Antibodypedia" id="45626">
    <property type="antibodies" value="79 antibodies from 16 providers"/>
</dbReference>
<dbReference type="DNASU" id="57528"/>
<dbReference type="Ensembl" id="ENST00000507359.3">
    <property type="protein sequence ID" value="ENSP00000426548.1"/>
    <property type="gene ID" value="ENSG00000183775.11"/>
</dbReference>
<dbReference type="Ensembl" id="ENST00000512467.6">
    <property type="protein sequence ID" value="ENSP00000424151.1"/>
    <property type="gene ID" value="ENSG00000183775.11"/>
</dbReference>
<dbReference type="GeneID" id="57528"/>
<dbReference type="KEGG" id="hsa:57528"/>
<dbReference type="MANE-Select" id="ENST00000512467.6">
    <property type="protein sequence ID" value="ENSP00000424151.1"/>
    <property type="RefSeq nucleotide sequence ID" value="NM_020768.4"/>
    <property type="RefSeq protein sequence ID" value="NP_065819.1"/>
</dbReference>
<dbReference type="UCSC" id="uc003lnm.2">
    <property type="organism name" value="human"/>
</dbReference>
<dbReference type="AGR" id="HGNC:29244"/>
<dbReference type="CTD" id="57528"/>
<dbReference type="DisGeNET" id="57528"/>
<dbReference type="GeneCards" id="KCTD16"/>
<dbReference type="HGNC" id="HGNC:29244">
    <property type="gene designation" value="KCTD16"/>
</dbReference>
<dbReference type="HPA" id="ENSG00000183775">
    <property type="expression patterns" value="Tissue enhanced (brain, retina)"/>
</dbReference>
<dbReference type="MIM" id="613423">
    <property type="type" value="gene"/>
</dbReference>
<dbReference type="neXtProt" id="NX_Q68DU8"/>
<dbReference type="OpenTargets" id="ENSG00000183775"/>
<dbReference type="PharmGKB" id="PA134973546"/>
<dbReference type="VEuPathDB" id="HostDB:ENSG00000183775"/>
<dbReference type="eggNOG" id="KOG2723">
    <property type="taxonomic scope" value="Eukaryota"/>
</dbReference>
<dbReference type="GeneTree" id="ENSGT00940000156071"/>
<dbReference type="HOGENOM" id="CLU_057051_1_0_1"/>
<dbReference type="InParanoid" id="Q68DU8"/>
<dbReference type="OMA" id="PHANVQT"/>
<dbReference type="OrthoDB" id="2414723at2759"/>
<dbReference type="PAN-GO" id="Q68DU8">
    <property type="GO annotations" value="2 GO annotations based on evolutionary models"/>
</dbReference>
<dbReference type="PhylomeDB" id="Q68DU8"/>
<dbReference type="TreeFam" id="TF315332"/>
<dbReference type="PathwayCommons" id="Q68DU8"/>
<dbReference type="SignaLink" id="Q68DU8"/>
<dbReference type="BioGRID-ORCS" id="57528">
    <property type="hits" value="9 hits in 1149 CRISPR screens"/>
</dbReference>
<dbReference type="CD-CODE" id="FB4E32DD">
    <property type="entry name" value="Presynaptic clusters and postsynaptic densities"/>
</dbReference>
<dbReference type="ChiTaRS" id="KCTD16">
    <property type="organism name" value="human"/>
</dbReference>
<dbReference type="EvolutionaryTrace" id="Q68DU8"/>
<dbReference type="GenomeRNAi" id="57528"/>
<dbReference type="Pharos" id="Q68DU8">
    <property type="development level" value="Tbio"/>
</dbReference>
<dbReference type="PRO" id="PR:Q68DU8"/>
<dbReference type="Proteomes" id="UP000005640">
    <property type="component" value="Chromosome 5"/>
</dbReference>
<dbReference type="RNAct" id="Q68DU8">
    <property type="molecule type" value="protein"/>
</dbReference>
<dbReference type="Bgee" id="ENSG00000183775">
    <property type="expression patterns" value="Expressed in Brodmann (1909) area 23 and 85 other cell types or tissues"/>
</dbReference>
<dbReference type="GO" id="GO:0042995">
    <property type="term" value="C:cell projection"/>
    <property type="evidence" value="ECO:0007669"/>
    <property type="project" value="UniProtKB-KW"/>
</dbReference>
<dbReference type="GO" id="GO:0045211">
    <property type="term" value="C:postsynaptic membrane"/>
    <property type="evidence" value="ECO:0000318"/>
    <property type="project" value="GO_Central"/>
</dbReference>
<dbReference type="GO" id="GO:0042734">
    <property type="term" value="C:presynaptic membrane"/>
    <property type="evidence" value="ECO:0000318"/>
    <property type="project" value="GO_Central"/>
</dbReference>
<dbReference type="GO" id="GO:0043235">
    <property type="term" value="C:receptor complex"/>
    <property type="evidence" value="ECO:0000318"/>
    <property type="project" value="GO_Central"/>
</dbReference>
<dbReference type="GO" id="GO:0099579">
    <property type="term" value="F:G protein-coupled neurotransmitter receptor activity involved in regulation of postsynaptic membrane potential"/>
    <property type="evidence" value="ECO:0007669"/>
    <property type="project" value="Ensembl"/>
</dbReference>
<dbReference type="GO" id="GO:0150047">
    <property type="term" value="F:G protein-coupled neurotransmitter receptor activity involved in regulation of presynaptic membrane potential"/>
    <property type="evidence" value="ECO:0007669"/>
    <property type="project" value="Ensembl"/>
</dbReference>
<dbReference type="GO" id="GO:0042802">
    <property type="term" value="F:identical protein binding"/>
    <property type="evidence" value="ECO:0007669"/>
    <property type="project" value="UniProtKB-ARBA"/>
</dbReference>
<dbReference type="GO" id="GO:0001662">
    <property type="term" value="P:behavioral fear response"/>
    <property type="evidence" value="ECO:0007669"/>
    <property type="project" value="Ensembl"/>
</dbReference>
<dbReference type="GO" id="GO:0007613">
    <property type="term" value="P:memory"/>
    <property type="evidence" value="ECO:0007669"/>
    <property type="project" value="Ensembl"/>
</dbReference>
<dbReference type="GO" id="GO:0051260">
    <property type="term" value="P:protein homooligomerization"/>
    <property type="evidence" value="ECO:0007669"/>
    <property type="project" value="InterPro"/>
</dbReference>
<dbReference type="GO" id="GO:0008277">
    <property type="term" value="P:regulation of G protein-coupled receptor signaling pathway"/>
    <property type="evidence" value="ECO:0000318"/>
    <property type="project" value="GO_Central"/>
</dbReference>
<dbReference type="CDD" id="cd18398">
    <property type="entry name" value="BTB_POZ_KCTD16"/>
    <property type="match status" value="1"/>
</dbReference>
<dbReference type="CDD" id="cd22219">
    <property type="entry name" value="H1_KCTD16"/>
    <property type="match status" value="1"/>
</dbReference>
<dbReference type="FunFam" id="3.30.710.10:FF:000031">
    <property type="entry name" value="BTB/POZ domain-containing protein KCTD16"/>
    <property type="match status" value="1"/>
</dbReference>
<dbReference type="Gene3D" id="3.30.710.10">
    <property type="entry name" value="Potassium Channel Kv1.1, Chain A"/>
    <property type="match status" value="1"/>
</dbReference>
<dbReference type="InterPro" id="IPR000210">
    <property type="entry name" value="BTB/POZ_dom"/>
</dbReference>
<dbReference type="InterPro" id="IPR049903">
    <property type="entry name" value="H1_KCTD16"/>
</dbReference>
<dbReference type="InterPro" id="IPR011333">
    <property type="entry name" value="SKP1/BTB/POZ_sf"/>
</dbReference>
<dbReference type="InterPro" id="IPR003131">
    <property type="entry name" value="T1-type_BTB"/>
</dbReference>
<dbReference type="PANTHER" id="PTHR14499:SF28">
    <property type="entry name" value="BTB_POZ DOMAIN-CONTAINING PROTEIN KCTD16"/>
    <property type="match status" value="1"/>
</dbReference>
<dbReference type="PANTHER" id="PTHR14499">
    <property type="entry name" value="POTASSIUM CHANNEL TETRAMERIZATION DOMAIN-CONTAINING"/>
    <property type="match status" value="1"/>
</dbReference>
<dbReference type="Pfam" id="PF02214">
    <property type="entry name" value="BTB_2"/>
    <property type="match status" value="1"/>
</dbReference>
<dbReference type="Pfam" id="PF23110">
    <property type="entry name" value="H1_KCTD8_12_16"/>
    <property type="match status" value="1"/>
</dbReference>
<dbReference type="SMART" id="SM00225">
    <property type="entry name" value="BTB"/>
    <property type="match status" value="1"/>
</dbReference>
<dbReference type="SUPFAM" id="SSF54695">
    <property type="entry name" value="POZ domain"/>
    <property type="match status" value="1"/>
</dbReference>
<feature type="chain" id="PRO_0000248593" description="BTB/POZ domain-containing protein KCTD16">
    <location>
        <begin position="1"/>
        <end position="428"/>
    </location>
</feature>
<feature type="domain" description="BTB">
    <location>
        <begin position="25"/>
        <end position="98"/>
    </location>
</feature>
<feature type="modified residue" description="Phosphotyrosine" evidence="1">
    <location>
        <position position="112"/>
    </location>
</feature>
<feature type="modified residue" description="Phosphoserine" evidence="1">
    <location>
        <position position="130"/>
    </location>
</feature>
<feature type="modified residue" description="Phosphoserine" evidence="1">
    <location>
        <position position="137"/>
    </location>
</feature>
<feature type="modified residue" description="Phosphoserine" evidence="1">
    <location>
        <position position="143"/>
    </location>
</feature>
<feature type="modified residue" description="Phosphoserine" evidence="1">
    <location>
        <position position="146"/>
    </location>
</feature>
<feature type="strand" evidence="4">
    <location>
        <begin position="25"/>
        <end position="31"/>
    </location>
</feature>
<feature type="strand" evidence="4">
    <location>
        <begin position="34"/>
        <end position="39"/>
    </location>
</feature>
<feature type="helix" evidence="4">
    <location>
        <begin position="40"/>
        <end position="43"/>
    </location>
</feature>
<feature type="helix" evidence="4">
    <location>
        <begin position="50"/>
        <end position="55"/>
    </location>
</feature>
<feature type="strand" evidence="4">
    <location>
        <begin position="73"/>
        <end position="75"/>
    </location>
</feature>
<feature type="turn" evidence="4">
    <location>
        <begin position="79"/>
        <end position="81"/>
    </location>
</feature>
<feature type="helix" evidence="4">
    <location>
        <begin position="82"/>
        <end position="91"/>
    </location>
</feature>
<feature type="helix" evidence="4">
    <location>
        <begin position="103"/>
        <end position="112"/>
    </location>
</feature>
<feature type="helix" evidence="4">
    <location>
        <begin position="116"/>
        <end position="122"/>
    </location>
</feature>
<feature type="strand" evidence="5">
    <location>
        <begin position="164"/>
        <end position="171"/>
    </location>
</feature>
<feature type="strand" evidence="5">
    <location>
        <begin position="193"/>
        <end position="197"/>
    </location>
</feature>
<feature type="helix" evidence="5">
    <location>
        <begin position="198"/>
        <end position="205"/>
    </location>
</feature>
<feature type="helix" evidence="5">
    <location>
        <begin position="206"/>
        <end position="208"/>
    </location>
</feature>
<feature type="strand" evidence="5">
    <location>
        <begin position="221"/>
        <end position="230"/>
    </location>
</feature>
<feature type="helix" evidence="5">
    <location>
        <begin position="233"/>
        <end position="242"/>
    </location>
</feature>
<feature type="strand" evidence="5">
    <location>
        <begin position="246"/>
        <end position="260"/>
    </location>
</feature>
<feature type="strand" evidence="5">
    <location>
        <begin position="266"/>
        <end position="278"/>
    </location>
</feature>
<gene>
    <name type="primary">KCTD16</name>
    <name type="synonym">KIAA1317</name>
</gene>
<comment type="function">
    <text evidence="1">Auxiliary subunit of GABA-B receptors that determine the pharmacology and kinetics of the receptor response. Increases agonist potency and markedly alter the G-protein signaling of the receptors by accelerating onset and promoting desensitization (By similarity).</text>
</comment>
<comment type="subunit">
    <text evidence="1 2">Homopentamer; forms an open pentamer (PubMed:28963344). In contrast to other BTB domain-containing proteins, does not interact with CUL3 (PubMed:28963344). Interacts as a tetramer with GABRB1 and GABRB2.</text>
</comment>
<comment type="interaction">
    <interactant intactId="EBI-20768174">
        <id>Q68DU8</id>
    </interactant>
    <interactant intactId="EBI-302641">
        <id>P05067-4</id>
        <label>APP</label>
    </interactant>
    <organismsDiffer>false</organismsDiffer>
    <experiments>3</experiments>
</comment>
<comment type="subcellular location">
    <subcellularLocation>
        <location>Presynaptic cell membrane</location>
    </subcellularLocation>
    <subcellularLocation>
        <location evidence="1">Postsynaptic cell membrane</location>
    </subcellularLocation>
</comment>
<comment type="sequence caution" evidence="3">
    <conflict type="erroneous initiation">
        <sequence resource="EMBL-CDS" id="BAA92555"/>
    </conflict>
</comment>
<keyword id="KW-0002">3D-structure</keyword>
<keyword id="KW-1003">Cell membrane</keyword>
<keyword id="KW-0966">Cell projection</keyword>
<keyword id="KW-0472">Membrane</keyword>
<keyword id="KW-0597">Phosphoprotein</keyword>
<keyword id="KW-0628">Postsynaptic cell membrane</keyword>
<keyword id="KW-1267">Proteomics identification</keyword>
<keyword id="KW-1185">Reference proteome</keyword>
<keyword id="KW-0770">Synapse</keyword>
<evidence type="ECO:0000250" key="1">
    <source>
        <dbReference type="UniProtKB" id="Q5DTY9"/>
    </source>
</evidence>
<evidence type="ECO:0000269" key="2">
    <source>
    </source>
</evidence>
<evidence type="ECO:0000305" key="3"/>
<evidence type="ECO:0007829" key="4">
    <source>
        <dbReference type="PDB" id="6OCR"/>
    </source>
</evidence>
<evidence type="ECO:0007829" key="5">
    <source>
        <dbReference type="PDB" id="6QB7"/>
    </source>
</evidence>